<comment type="catalytic activity">
    <reaction evidence="2">
        <text>5-phospho-beta-D-ribosylamine + glycine + ATP = N(1)-(5-phospho-beta-D-ribosyl)glycinamide + ADP + phosphate + H(+)</text>
        <dbReference type="Rhea" id="RHEA:17453"/>
        <dbReference type="ChEBI" id="CHEBI:15378"/>
        <dbReference type="ChEBI" id="CHEBI:30616"/>
        <dbReference type="ChEBI" id="CHEBI:43474"/>
        <dbReference type="ChEBI" id="CHEBI:57305"/>
        <dbReference type="ChEBI" id="CHEBI:58681"/>
        <dbReference type="ChEBI" id="CHEBI:143788"/>
        <dbReference type="ChEBI" id="CHEBI:456216"/>
        <dbReference type="EC" id="6.3.4.13"/>
    </reaction>
</comment>
<comment type="cofactor">
    <cofactor evidence="1">
        <name>Mg(2+)</name>
        <dbReference type="ChEBI" id="CHEBI:18420"/>
    </cofactor>
    <cofactor evidence="1">
        <name>Mn(2+)</name>
        <dbReference type="ChEBI" id="CHEBI:29035"/>
    </cofactor>
    <text evidence="1">Binds 1 Mg(2+) or Mn(2+) ion per subunit.</text>
</comment>
<comment type="pathway">
    <text evidence="2">Purine metabolism; IMP biosynthesis via de novo pathway; N(1)-(5-phospho-D-ribosyl)glycinamide from 5-phospho-alpha-D-ribose 1-diphosphate: step 2/2.</text>
</comment>
<comment type="subunit">
    <text evidence="2">Monomer.</text>
</comment>
<comment type="similarity">
    <text evidence="2">Belongs to the GARS family.</text>
</comment>
<name>PUR2_SALTI</name>
<feature type="chain" id="PRO_0000151476" description="Phosphoribosylamine--glycine ligase">
    <location>
        <begin position="1"/>
        <end position="429"/>
    </location>
</feature>
<feature type="domain" description="ATP-grasp" evidence="2">
    <location>
        <begin position="109"/>
        <end position="316"/>
    </location>
</feature>
<feature type="binding site" evidence="2">
    <location>
        <begin position="135"/>
        <end position="196"/>
    </location>
    <ligand>
        <name>ATP</name>
        <dbReference type="ChEBI" id="CHEBI:30616"/>
    </ligand>
</feature>
<feature type="binding site" evidence="2">
    <location>
        <position position="286"/>
    </location>
    <ligand>
        <name>Mg(2+)</name>
        <dbReference type="ChEBI" id="CHEBI:18420"/>
    </ligand>
</feature>
<feature type="binding site" evidence="2">
    <location>
        <position position="288"/>
    </location>
    <ligand>
        <name>Mg(2+)</name>
        <dbReference type="ChEBI" id="CHEBI:18420"/>
    </ligand>
</feature>
<sequence>MKVLVIGNGGREHALAWKAAQSPLVDTVFVAPGNAGTALEPALQNVAIGVTDIPALLSFAQNEKIDLTIVGPEAPLVIGVVDAFRAAGLKIFGPTEGAAQLEGSKAFTKDFLARHQIPTAEYQNFTEIEPALAYLREKGAPIVIKADGLAAGKGVIVAMTLEEAEAAVHDMLAGNAFGDAGHRIVIEEFLDGEEASFIVMVDGEHVLPMATSQDHKRVGNGDTGPNTGGMGAYSPAPVVTDEVHQRTMERIIWPTVKGMAAEGNTYTGFLYAGLMIDKQGNPKVIEFNCRFGDPETQPIMLRMKSDLVDLCLAACDGKLDEKTSEWDERASLGVVIAAGGYPGSYSTGDEIHGLPLEEVADGKVFHAGTKLADDDRVLTSGGRVLCATALGHTVAEAQKRAYALMTDIRWDGSFSRNDIGWRAIEREQN</sequence>
<keyword id="KW-0067">ATP-binding</keyword>
<keyword id="KW-0436">Ligase</keyword>
<keyword id="KW-0460">Magnesium</keyword>
<keyword id="KW-0464">Manganese</keyword>
<keyword id="KW-0479">Metal-binding</keyword>
<keyword id="KW-0547">Nucleotide-binding</keyword>
<keyword id="KW-0658">Purine biosynthesis</keyword>
<organism>
    <name type="scientific">Salmonella typhi</name>
    <dbReference type="NCBI Taxonomy" id="90370"/>
    <lineage>
        <taxon>Bacteria</taxon>
        <taxon>Pseudomonadati</taxon>
        <taxon>Pseudomonadota</taxon>
        <taxon>Gammaproteobacteria</taxon>
        <taxon>Enterobacterales</taxon>
        <taxon>Enterobacteriaceae</taxon>
        <taxon>Salmonella</taxon>
    </lineage>
</organism>
<protein>
    <recommendedName>
        <fullName evidence="2">Phosphoribosylamine--glycine ligase</fullName>
        <ecNumber evidence="2">6.3.4.13</ecNumber>
    </recommendedName>
    <alternativeName>
        <fullName evidence="2">GARS</fullName>
    </alternativeName>
    <alternativeName>
        <fullName evidence="2">Glycinamide ribonucleotide synthetase</fullName>
    </alternativeName>
    <alternativeName>
        <fullName evidence="2">Phosphoribosylglycinamide synthetase</fullName>
    </alternativeName>
</protein>
<gene>
    <name evidence="2" type="primary">purD</name>
    <name type="ordered locus">STY3710</name>
    <name type="ordered locus">t3456</name>
</gene>
<accession>Q8Z334</accession>
<dbReference type="EC" id="6.3.4.13" evidence="2"/>
<dbReference type="EMBL" id="AL513382">
    <property type="protein sequence ID" value="CAD09469.1"/>
    <property type="molecule type" value="Genomic_DNA"/>
</dbReference>
<dbReference type="EMBL" id="AE014613">
    <property type="protein sequence ID" value="AAO70972.1"/>
    <property type="molecule type" value="Genomic_DNA"/>
</dbReference>
<dbReference type="RefSeq" id="NP_457899.1">
    <property type="nucleotide sequence ID" value="NC_003198.1"/>
</dbReference>
<dbReference type="RefSeq" id="WP_000866776.1">
    <property type="nucleotide sequence ID" value="NZ_WSUR01000043.1"/>
</dbReference>
<dbReference type="SMR" id="Q8Z334"/>
<dbReference type="STRING" id="220341.gene:17587570"/>
<dbReference type="KEGG" id="stt:t3456"/>
<dbReference type="KEGG" id="sty:STY3710"/>
<dbReference type="PATRIC" id="fig|220341.7.peg.3782"/>
<dbReference type="eggNOG" id="COG0151">
    <property type="taxonomic scope" value="Bacteria"/>
</dbReference>
<dbReference type="HOGENOM" id="CLU_027420_3_1_6"/>
<dbReference type="OMA" id="KATVCKY"/>
<dbReference type="OrthoDB" id="9807240at2"/>
<dbReference type="UniPathway" id="UPA00074">
    <property type="reaction ID" value="UER00125"/>
</dbReference>
<dbReference type="Proteomes" id="UP000000541">
    <property type="component" value="Chromosome"/>
</dbReference>
<dbReference type="Proteomes" id="UP000002670">
    <property type="component" value="Chromosome"/>
</dbReference>
<dbReference type="GO" id="GO:0005524">
    <property type="term" value="F:ATP binding"/>
    <property type="evidence" value="ECO:0007669"/>
    <property type="project" value="UniProtKB-KW"/>
</dbReference>
<dbReference type="GO" id="GO:0046872">
    <property type="term" value="F:metal ion binding"/>
    <property type="evidence" value="ECO:0007669"/>
    <property type="project" value="UniProtKB-KW"/>
</dbReference>
<dbReference type="GO" id="GO:0004637">
    <property type="term" value="F:phosphoribosylamine-glycine ligase activity"/>
    <property type="evidence" value="ECO:0007669"/>
    <property type="project" value="UniProtKB-UniRule"/>
</dbReference>
<dbReference type="GO" id="GO:0006189">
    <property type="term" value="P:'de novo' IMP biosynthetic process"/>
    <property type="evidence" value="ECO:0007669"/>
    <property type="project" value="UniProtKB-UniRule"/>
</dbReference>
<dbReference type="GO" id="GO:0009113">
    <property type="term" value="P:purine nucleobase biosynthetic process"/>
    <property type="evidence" value="ECO:0007669"/>
    <property type="project" value="InterPro"/>
</dbReference>
<dbReference type="FunFam" id="3.30.470.20:FF:000031">
    <property type="entry name" value="Phosphoribosylamine--glycine ligase"/>
    <property type="match status" value="1"/>
</dbReference>
<dbReference type="FunFam" id="3.40.50.20:FF:000006">
    <property type="entry name" value="Phosphoribosylamine--glycine ligase, chloroplastic"/>
    <property type="match status" value="1"/>
</dbReference>
<dbReference type="FunFam" id="3.30.1490.20:FF:000006">
    <property type="entry name" value="phosphoribosylamine--glycine ligase, chloroplastic-like"/>
    <property type="match status" value="1"/>
</dbReference>
<dbReference type="FunFam" id="3.90.600.10:FF:000001">
    <property type="entry name" value="Trifunctional purine biosynthetic protein adenosine-3"/>
    <property type="match status" value="1"/>
</dbReference>
<dbReference type="Gene3D" id="3.40.50.20">
    <property type="match status" value="1"/>
</dbReference>
<dbReference type="Gene3D" id="3.30.1490.20">
    <property type="entry name" value="ATP-grasp fold, A domain"/>
    <property type="match status" value="1"/>
</dbReference>
<dbReference type="Gene3D" id="3.30.470.20">
    <property type="entry name" value="ATP-grasp fold, B domain"/>
    <property type="match status" value="1"/>
</dbReference>
<dbReference type="Gene3D" id="3.90.600.10">
    <property type="entry name" value="Phosphoribosylglycinamide synthetase, C-terminal domain"/>
    <property type="match status" value="1"/>
</dbReference>
<dbReference type="HAMAP" id="MF_00138">
    <property type="entry name" value="GARS"/>
    <property type="match status" value="1"/>
</dbReference>
<dbReference type="InterPro" id="IPR011761">
    <property type="entry name" value="ATP-grasp"/>
</dbReference>
<dbReference type="InterPro" id="IPR013815">
    <property type="entry name" value="ATP_grasp_subdomain_1"/>
</dbReference>
<dbReference type="InterPro" id="IPR016185">
    <property type="entry name" value="PreATP-grasp_dom_sf"/>
</dbReference>
<dbReference type="InterPro" id="IPR020561">
    <property type="entry name" value="PRibGlycinamid_synth_ATP-grasp"/>
</dbReference>
<dbReference type="InterPro" id="IPR000115">
    <property type="entry name" value="PRibGlycinamide_synth"/>
</dbReference>
<dbReference type="InterPro" id="IPR020560">
    <property type="entry name" value="PRibGlycinamide_synth_C-dom"/>
</dbReference>
<dbReference type="InterPro" id="IPR037123">
    <property type="entry name" value="PRibGlycinamide_synth_C_sf"/>
</dbReference>
<dbReference type="InterPro" id="IPR020559">
    <property type="entry name" value="PRibGlycinamide_synth_CS"/>
</dbReference>
<dbReference type="InterPro" id="IPR020562">
    <property type="entry name" value="PRibGlycinamide_synth_N"/>
</dbReference>
<dbReference type="InterPro" id="IPR011054">
    <property type="entry name" value="Rudment_hybrid_motif"/>
</dbReference>
<dbReference type="NCBIfam" id="TIGR00877">
    <property type="entry name" value="purD"/>
    <property type="match status" value="1"/>
</dbReference>
<dbReference type="PANTHER" id="PTHR43472">
    <property type="entry name" value="PHOSPHORIBOSYLAMINE--GLYCINE LIGASE"/>
    <property type="match status" value="1"/>
</dbReference>
<dbReference type="PANTHER" id="PTHR43472:SF1">
    <property type="entry name" value="PHOSPHORIBOSYLAMINE--GLYCINE LIGASE, CHLOROPLASTIC"/>
    <property type="match status" value="1"/>
</dbReference>
<dbReference type="Pfam" id="PF01071">
    <property type="entry name" value="GARS_A"/>
    <property type="match status" value="1"/>
</dbReference>
<dbReference type="Pfam" id="PF02843">
    <property type="entry name" value="GARS_C"/>
    <property type="match status" value="1"/>
</dbReference>
<dbReference type="Pfam" id="PF02844">
    <property type="entry name" value="GARS_N"/>
    <property type="match status" value="1"/>
</dbReference>
<dbReference type="SMART" id="SM01209">
    <property type="entry name" value="GARS_A"/>
    <property type="match status" value="1"/>
</dbReference>
<dbReference type="SMART" id="SM01210">
    <property type="entry name" value="GARS_C"/>
    <property type="match status" value="1"/>
</dbReference>
<dbReference type="SUPFAM" id="SSF56059">
    <property type="entry name" value="Glutathione synthetase ATP-binding domain-like"/>
    <property type="match status" value="1"/>
</dbReference>
<dbReference type="SUPFAM" id="SSF52440">
    <property type="entry name" value="PreATP-grasp domain"/>
    <property type="match status" value="1"/>
</dbReference>
<dbReference type="SUPFAM" id="SSF51246">
    <property type="entry name" value="Rudiment single hybrid motif"/>
    <property type="match status" value="1"/>
</dbReference>
<dbReference type="PROSITE" id="PS50975">
    <property type="entry name" value="ATP_GRASP"/>
    <property type="match status" value="1"/>
</dbReference>
<dbReference type="PROSITE" id="PS00184">
    <property type="entry name" value="GARS"/>
    <property type="match status" value="1"/>
</dbReference>
<proteinExistence type="inferred from homology"/>
<reference key="1">
    <citation type="journal article" date="2001" name="Nature">
        <title>Complete genome sequence of a multiple drug resistant Salmonella enterica serovar Typhi CT18.</title>
        <authorList>
            <person name="Parkhill J."/>
            <person name="Dougan G."/>
            <person name="James K.D."/>
            <person name="Thomson N.R."/>
            <person name="Pickard D."/>
            <person name="Wain J."/>
            <person name="Churcher C.M."/>
            <person name="Mungall K.L."/>
            <person name="Bentley S.D."/>
            <person name="Holden M.T.G."/>
            <person name="Sebaihia M."/>
            <person name="Baker S."/>
            <person name="Basham D."/>
            <person name="Brooks K."/>
            <person name="Chillingworth T."/>
            <person name="Connerton P."/>
            <person name="Cronin A."/>
            <person name="Davis P."/>
            <person name="Davies R.M."/>
            <person name="Dowd L."/>
            <person name="White N."/>
            <person name="Farrar J."/>
            <person name="Feltwell T."/>
            <person name="Hamlin N."/>
            <person name="Haque A."/>
            <person name="Hien T.T."/>
            <person name="Holroyd S."/>
            <person name="Jagels K."/>
            <person name="Krogh A."/>
            <person name="Larsen T.S."/>
            <person name="Leather S."/>
            <person name="Moule S."/>
            <person name="O'Gaora P."/>
            <person name="Parry C."/>
            <person name="Quail M.A."/>
            <person name="Rutherford K.M."/>
            <person name="Simmonds M."/>
            <person name="Skelton J."/>
            <person name="Stevens K."/>
            <person name="Whitehead S."/>
            <person name="Barrell B.G."/>
        </authorList>
    </citation>
    <scope>NUCLEOTIDE SEQUENCE [LARGE SCALE GENOMIC DNA]</scope>
    <source>
        <strain>CT18</strain>
    </source>
</reference>
<reference key="2">
    <citation type="journal article" date="2003" name="J. Bacteriol.">
        <title>Comparative genomics of Salmonella enterica serovar Typhi strains Ty2 and CT18.</title>
        <authorList>
            <person name="Deng W."/>
            <person name="Liou S.-R."/>
            <person name="Plunkett G. III"/>
            <person name="Mayhew G.F."/>
            <person name="Rose D.J."/>
            <person name="Burland V."/>
            <person name="Kodoyianni V."/>
            <person name="Schwartz D.C."/>
            <person name="Blattner F.R."/>
        </authorList>
    </citation>
    <scope>NUCLEOTIDE SEQUENCE [LARGE SCALE GENOMIC DNA]</scope>
    <source>
        <strain>ATCC 700931 / Ty2</strain>
    </source>
</reference>
<evidence type="ECO:0000250" key="1"/>
<evidence type="ECO:0000255" key="2">
    <source>
        <dbReference type="HAMAP-Rule" id="MF_00138"/>
    </source>
</evidence>